<evidence type="ECO:0000255" key="1">
    <source>
        <dbReference type="HAMAP-Rule" id="MF_00651"/>
    </source>
</evidence>
<comment type="function">
    <text evidence="1">Could be a nuclease involved in processing of the 5'-end of pre-16S rRNA.</text>
</comment>
<comment type="subcellular location">
    <subcellularLocation>
        <location evidence="1">Cytoplasm</location>
    </subcellularLocation>
</comment>
<comment type="similarity">
    <text evidence="1">Belongs to the YqgF nuclease family.</text>
</comment>
<name>YQGF_CHRSD</name>
<gene>
    <name type="ordered locus">Csal_0059</name>
</gene>
<organism>
    <name type="scientific">Chromohalobacter salexigens (strain ATCC BAA-138 / DSM 3043 / CIP 106854 / NCIMB 13768 / 1H11)</name>
    <dbReference type="NCBI Taxonomy" id="290398"/>
    <lineage>
        <taxon>Bacteria</taxon>
        <taxon>Pseudomonadati</taxon>
        <taxon>Pseudomonadota</taxon>
        <taxon>Gammaproteobacteria</taxon>
        <taxon>Oceanospirillales</taxon>
        <taxon>Halomonadaceae</taxon>
        <taxon>Chromohalobacter</taxon>
    </lineage>
</organism>
<proteinExistence type="inferred from homology"/>
<feature type="chain" id="PRO_0000257519" description="Putative pre-16S rRNA nuclease">
    <location>
        <begin position="1"/>
        <end position="148"/>
    </location>
</feature>
<accession>Q1R1I5</accession>
<dbReference type="EC" id="3.1.-.-" evidence="1"/>
<dbReference type="EMBL" id="CP000285">
    <property type="protein sequence ID" value="ABE57423.1"/>
    <property type="molecule type" value="Genomic_DNA"/>
</dbReference>
<dbReference type="RefSeq" id="WP_011505369.1">
    <property type="nucleotide sequence ID" value="NC_007963.1"/>
</dbReference>
<dbReference type="SMR" id="Q1R1I5"/>
<dbReference type="STRING" id="290398.Csal_0059"/>
<dbReference type="GeneID" id="95332811"/>
<dbReference type="KEGG" id="csa:Csal_0059"/>
<dbReference type="eggNOG" id="COG0816">
    <property type="taxonomic scope" value="Bacteria"/>
</dbReference>
<dbReference type="HOGENOM" id="CLU_098240_3_0_6"/>
<dbReference type="OrthoDB" id="9796140at2"/>
<dbReference type="Proteomes" id="UP000000239">
    <property type="component" value="Chromosome"/>
</dbReference>
<dbReference type="GO" id="GO:0005829">
    <property type="term" value="C:cytosol"/>
    <property type="evidence" value="ECO:0007669"/>
    <property type="project" value="TreeGrafter"/>
</dbReference>
<dbReference type="GO" id="GO:0004518">
    <property type="term" value="F:nuclease activity"/>
    <property type="evidence" value="ECO:0007669"/>
    <property type="project" value="UniProtKB-KW"/>
</dbReference>
<dbReference type="GO" id="GO:0000967">
    <property type="term" value="P:rRNA 5'-end processing"/>
    <property type="evidence" value="ECO:0007669"/>
    <property type="project" value="UniProtKB-UniRule"/>
</dbReference>
<dbReference type="CDD" id="cd16964">
    <property type="entry name" value="YqgF"/>
    <property type="match status" value="1"/>
</dbReference>
<dbReference type="Gene3D" id="3.30.420.140">
    <property type="entry name" value="YqgF/RNase H-like domain"/>
    <property type="match status" value="1"/>
</dbReference>
<dbReference type="HAMAP" id="MF_00651">
    <property type="entry name" value="Nuclease_YqgF"/>
    <property type="match status" value="1"/>
</dbReference>
<dbReference type="InterPro" id="IPR012337">
    <property type="entry name" value="RNaseH-like_sf"/>
</dbReference>
<dbReference type="InterPro" id="IPR005227">
    <property type="entry name" value="YqgF"/>
</dbReference>
<dbReference type="InterPro" id="IPR006641">
    <property type="entry name" value="YqgF/RNaseH-like_dom"/>
</dbReference>
<dbReference type="InterPro" id="IPR037027">
    <property type="entry name" value="YqgF/RNaseH-like_dom_sf"/>
</dbReference>
<dbReference type="NCBIfam" id="TIGR00250">
    <property type="entry name" value="RNAse_H_YqgF"/>
    <property type="match status" value="1"/>
</dbReference>
<dbReference type="PANTHER" id="PTHR33317">
    <property type="entry name" value="POLYNUCLEOTIDYL TRANSFERASE, RIBONUCLEASE H-LIKE SUPERFAMILY PROTEIN"/>
    <property type="match status" value="1"/>
</dbReference>
<dbReference type="PANTHER" id="PTHR33317:SF4">
    <property type="entry name" value="POLYNUCLEOTIDYL TRANSFERASE, RIBONUCLEASE H-LIKE SUPERFAMILY PROTEIN"/>
    <property type="match status" value="1"/>
</dbReference>
<dbReference type="Pfam" id="PF03652">
    <property type="entry name" value="RuvX"/>
    <property type="match status" value="1"/>
</dbReference>
<dbReference type="SMART" id="SM00732">
    <property type="entry name" value="YqgFc"/>
    <property type="match status" value="1"/>
</dbReference>
<dbReference type="SUPFAM" id="SSF53098">
    <property type="entry name" value="Ribonuclease H-like"/>
    <property type="match status" value="1"/>
</dbReference>
<reference key="1">
    <citation type="journal article" date="2011" name="Stand. Genomic Sci.">
        <title>Complete genome sequence of the halophilic and highly halotolerant Chromohalobacter salexigens type strain (1H11(T)).</title>
        <authorList>
            <person name="Copeland A."/>
            <person name="O'Connor K."/>
            <person name="Lucas S."/>
            <person name="Lapidus A."/>
            <person name="Berry K.W."/>
            <person name="Detter J.C."/>
            <person name="Del Rio T.G."/>
            <person name="Hammon N."/>
            <person name="Dalin E."/>
            <person name="Tice H."/>
            <person name="Pitluck S."/>
            <person name="Bruce D."/>
            <person name="Goodwin L."/>
            <person name="Han C."/>
            <person name="Tapia R."/>
            <person name="Saunders E."/>
            <person name="Schmutz J."/>
            <person name="Brettin T."/>
            <person name="Larimer F."/>
            <person name="Land M."/>
            <person name="Hauser L."/>
            <person name="Vargas C."/>
            <person name="Nieto J.J."/>
            <person name="Kyrpides N.C."/>
            <person name="Ivanova N."/>
            <person name="Goker M."/>
            <person name="Klenk H.P."/>
            <person name="Csonka L.N."/>
            <person name="Woyke T."/>
        </authorList>
    </citation>
    <scope>NUCLEOTIDE SEQUENCE [LARGE SCALE GENOMIC DNA]</scope>
    <source>
        <strain>ATCC BAA-138 / DSM 3043 / CIP 106854 / NCIMB 13768 / 1H11</strain>
    </source>
</reference>
<keyword id="KW-0963">Cytoplasm</keyword>
<keyword id="KW-0378">Hydrolase</keyword>
<keyword id="KW-0540">Nuclease</keyword>
<keyword id="KW-1185">Reference proteome</keyword>
<keyword id="KW-0690">Ribosome biogenesis</keyword>
<protein>
    <recommendedName>
        <fullName evidence="1">Putative pre-16S rRNA nuclease</fullName>
        <ecNumber evidence="1">3.1.-.-</ecNumber>
    </recommendedName>
</protein>
<sequence length="148" mass="16281">MAEAGQRLVLAFDFGTRRIGVAVGNEMLGSATALAPLPARDGIPDWQQIAALLEEWQPDLLVVGLPLNMDGTESDMSRRARKFGNRLHGRFGKPVEVFDERGSTRAAKRIARDAGHRGNYRDDGVDGIAAQLILESFFADDTFLQRMP</sequence>